<feature type="chain" id="PRO_0000206877" description="Uncharacterized protein YifB">
    <location>
        <begin position="1"/>
        <end position="506"/>
    </location>
</feature>
<keyword id="KW-1185">Reference proteome</keyword>
<name>YIFB_ECOLI</name>
<gene>
    <name type="primary">yifB</name>
    <name type="ordered locus">b3765</name>
    <name type="ordered locus">JW3738</name>
</gene>
<protein>
    <recommendedName>
        <fullName>Uncharacterized protein YifB</fullName>
    </recommendedName>
</protein>
<evidence type="ECO:0000305" key="1"/>
<accession>P22787</accession>
<accession>Q2M876</accession>
<reference key="1">
    <citation type="journal article" date="1991" name="Gene">
        <title>Sequence and transcriptional activity of the Escherichia coli K-12 chromosome region between rrnC and ilvGMEDA.</title>
        <authorList>
            <person name="Coppola G."/>
            <person name="Huang F."/>
            <person name="Riley J."/>
            <person name="Cox J.L."/>
            <person name="Hantzopoulos P."/>
            <person name="Zhou L.-B."/>
            <person name="Calhoun D.H."/>
        </authorList>
    </citation>
    <scope>NUCLEOTIDE SEQUENCE [GENOMIC DNA]</scope>
    <source>
        <strain>K12</strain>
    </source>
</reference>
<reference key="2">
    <citation type="journal article" date="1992" name="Science">
        <title>Analysis of the Escherichia coli genome: DNA sequence of the region from 84.5 to 86.5 minutes.</title>
        <authorList>
            <person name="Daniels D.L."/>
            <person name="Plunkett G. III"/>
            <person name="Burland V.D."/>
            <person name="Blattner F.R."/>
        </authorList>
    </citation>
    <scope>NUCLEOTIDE SEQUENCE [LARGE SCALE GENOMIC DNA]</scope>
    <source>
        <strain>K12 / MG1655 / ATCC 47076</strain>
    </source>
</reference>
<reference key="3">
    <citation type="journal article" date="1997" name="Science">
        <title>The complete genome sequence of Escherichia coli K-12.</title>
        <authorList>
            <person name="Blattner F.R."/>
            <person name="Plunkett G. III"/>
            <person name="Bloch C.A."/>
            <person name="Perna N.T."/>
            <person name="Burland V."/>
            <person name="Riley M."/>
            <person name="Collado-Vides J."/>
            <person name="Glasner J.D."/>
            <person name="Rode C.K."/>
            <person name="Mayhew G.F."/>
            <person name="Gregor J."/>
            <person name="Davis N.W."/>
            <person name="Kirkpatrick H.A."/>
            <person name="Goeden M.A."/>
            <person name="Rose D.J."/>
            <person name="Mau B."/>
            <person name="Shao Y."/>
        </authorList>
    </citation>
    <scope>NUCLEOTIDE SEQUENCE [LARGE SCALE GENOMIC DNA]</scope>
    <source>
        <strain>K12 / MG1655 / ATCC 47076</strain>
    </source>
</reference>
<reference key="4">
    <citation type="journal article" date="2006" name="Mol. Syst. Biol.">
        <title>Highly accurate genome sequences of Escherichia coli K-12 strains MG1655 and W3110.</title>
        <authorList>
            <person name="Hayashi K."/>
            <person name="Morooka N."/>
            <person name="Yamamoto Y."/>
            <person name="Fujita K."/>
            <person name="Isono K."/>
            <person name="Choi S."/>
            <person name="Ohtsubo E."/>
            <person name="Baba T."/>
            <person name="Wanner B.L."/>
            <person name="Mori H."/>
            <person name="Horiuchi T."/>
        </authorList>
    </citation>
    <scope>NUCLEOTIDE SEQUENCE [LARGE SCALE GENOMIC DNA]</scope>
    <source>
        <strain>K12 / W3110 / ATCC 27325 / DSM 5911</strain>
    </source>
</reference>
<comment type="similarity">
    <text evidence="1">Belongs to the Mg-chelatase subunits D/I family. ComM subfamily.</text>
</comment>
<comment type="sequence caution" evidence="1">
    <conflict type="erroneous initiation">
        <sequence resource="EMBL-CDS" id="AAA24609"/>
    </conflict>
</comment>
<comment type="sequence caution" evidence="1">
    <conflict type="erroneous initiation">
        <sequence resource="EMBL-CDS" id="AAA24610"/>
    </conflict>
</comment>
<comment type="sequence caution" evidence="1">
    <conflict type="erroneous initiation">
        <sequence resource="EMBL-CDS" id="AAA67569"/>
    </conflict>
</comment>
<comment type="sequence caution" evidence="1">
    <conflict type="erroneous initiation">
        <sequence resource="EMBL-CDS" id="BAE77530"/>
    </conflict>
</comment>
<organism>
    <name type="scientific">Escherichia coli (strain K12)</name>
    <dbReference type="NCBI Taxonomy" id="83333"/>
    <lineage>
        <taxon>Bacteria</taxon>
        <taxon>Pseudomonadati</taxon>
        <taxon>Pseudomonadota</taxon>
        <taxon>Gammaproteobacteria</taxon>
        <taxon>Enterobacterales</taxon>
        <taxon>Enterobacteriaceae</taxon>
        <taxon>Escherichia</taxon>
    </lineage>
</organism>
<sequence length="506" mass="55146">MSLSIVHTRAALGVNAPPITVEVHISKGLPGLTMVGLPETTVKEARDRVRSAIINSGYEYPAKKITINLAPADLPKEGGRYDLPIAIALLAASEQLTANKLDEYELVGELALTGALRGVPGAISSATEAIKSGRKIIVAKDNEDEVGLINGEGCLIADHLQAVCAFLEGKHALERPKPTDAVSRALQHDLSDVIGQEQGKRGLEITAAGGHNLLLIGPPGTGKTMLASRINGLLPDLSNEEALESAAILSLVNAESVQKQWRQRPFRSPHHSASLTAMVGGGAIPGPGEISLAHNGVLFLDELPEFERRTLDALREPIESGQIHLSRTRAKITYPARFQLVAAMNPSPTGHYQGNHNRCTPEQTLRYLNRLSGPFLDRFDLSLEIPLPPPGILSKTVVPGESSATVKQRVMAARERQFKRQNKLNAWLDSPEIRQFCKLESEDAMWLEGTLIHLGLSIRAWQRLLKVARTIADIDQSDIITRQHLQEAVSYRAIDRLLIHLQKLLT</sequence>
<proteinExistence type="inferred from homology"/>
<dbReference type="EMBL" id="M37337">
    <property type="protein sequence ID" value="AAA24609.1"/>
    <property type="status" value="ALT_INIT"/>
    <property type="molecule type" value="Genomic_DNA"/>
</dbReference>
<dbReference type="EMBL" id="M37337">
    <property type="protein sequence ID" value="AAA24610.1"/>
    <property type="status" value="ALT_INIT"/>
    <property type="molecule type" value="Genomic_DNA"/>
</dbReference>
<dbReference type="EMBL" id="M87049">
    <property type="protein sequence ID" value="AAA67569.1"/>
    <property type="status" value="ALT_INIT"/>
    <property type="molecule type" value="Genomic_DNA"/>
</dbReference>
<dbReference type="EMBL" id="U00096">
    <property type="protein sequence ID" value="AAC77486.2"/>
    <property type="molecule type" value="Genomic_DNA"/>
</dbReference>
<dbReference type="EMBL" id="AP009048">
    <property type="protein sequence ID" value="BAE77530.1"/>
    <property type="status" value="ALT_INIT"/>
    <property type="molecule type" value="Genomic_DNA"/>
</dbReference>
<dbReference type="PIR" id="JQ0872">
    <property type="entry name" value="JQ0872"/>
</dbReference>
<dbReference type="RefSeq" id="NP_418214.2">
    <property type="nucleotide sequence ID" value="NC_000913.3"/>
</dbReference>
<dbReference type="RefSeq" id="WP_000058964.1">
    <property type="nucleotide sequence ID" value="NZ_LN832404.1"/>
</dbReference>
<dbReference type="SMR" id="P22787"/>
<dbReference type="BioGRID" id="4263148">
    <property type="interactions" value="17"/>
</dbReference>
<dbReference type="FunCoup" id="P22787">
    <property type="interactions" value="420"/>
</dbReference>
<dbReference type="IntAct" id="P22787">
    <property type="interactions" value="7"/>
</dbReference>
<dbReference type="STRING" id="511145.b3765"/>
<dbReference type="PaxDb" id="511145-b3765"/>
<dbReference type="EnsemblBacteria" id="AAC77486">
    <property type="protein sequence ID" value="AAC77486"/>
    <property type="gene ID" value="b3765"/>
</dbReference>
<dbReference type="GeneID" id="948282"/>
<dbReference type="KEGG" id="ecj:JW3738"/>
<dbReference type="KEGG" id="eco:b3765"/>
<dbReference type="KEGG" id="ecoc:C3026_20400"/>
<dbReference type="PATRIC" id="fig|511145.12.peg.3883"/>
<dbReference type="EchoBASE" id="EB1240"/>
<dbReference type="eggNOG" id="COG0606">
    <property type="taxonomic scope" value="Bacteria"/>
</dbReference>
<dbReference type="HOGENOM" id="CLU_026145_1_1_6"/>
<dbReference type="InParanoid" id="P22787"/>
<dbReference type="OrthoDB" id="9813147at2"/>
<dbReference type="PhylomeDB" id="P22787"/>
<dbReference type="BioCyc" id="EcoCyc:EG11260-MONOMER"/>
<dbReference type="PRO" id="PR:P22787"/>
<dbReference type="Proteomes" id="UP000000625">
    <property type="component" value="Chromosome"/>
</dbReference>
<dbReference type="GO" id="GO:0005524">
    <property type="term" value="F:ATP binding"/>
    <property type="evidence" value="ECO:0007669"/>
    <property type="project" value="InterPro"/>
</dbReference>
<dbReference type="GO" id="GO:0016887">
    <property type="term" value="F:ATP hydrolysis activity"/>
    <property type="evidence" value="ECO:0007669"/>
    <property type="project" value="InterPro"/>
</dbReference>
<dbReference type="GO" id="GO:0004176">
    <property type="term" value="F:ATP-dependent peptidase activity"/>
    <property type="evidence" value="ECO:0000250"/>
    <property type="project" value="EcoCyc"/>
</dbReference>
<dbReference type="FunFam" id="3.40.50.300:FF:001404">
    <property type="entry name" value="Magnesium chelatase family protein"/>
    <property type="match status" value="1"/>
</dbReference>
<dbReference type="Gene3D" id="3.30.230.10">
    <property type="match status" value="1"/>
</dbReference>
<dbReference type="Gene3D" id="3.40.50.300">
    <property type="entry name" value="P-loop containing nucleotide triphosphate hydrolases"/>
    <property type="match status" value="1"/>
</dbReference>
<dbReference type="InterPro" id="IPR003593">
    <property type="entry name" value="AAA+_ATPase"/>
</dbReference>
<dbReference type="InterPro" id="IPR045006">
    <property type="entry name" value="CHLI-like"/>
</dbReference>
<dbReference type="InterPro" id="IPR004482">
    <property type="entry name" value="Mg_chelat-rel"/>
</dbReference>
<dbReference type="InterPro" id="IPR025158">
    <property type="entry name" value="Mg_chelat-rel_C"/>
</dbReference>
<dbReference type="InterPro" id="IPR000523">
    <property type="entry name" value="Mg_chelatse_chII-like_cat_dom"/>
</dbReference>
<dbReference type="InterPro" id="IPR027417">
    <property type="entry name" value="P-loop_NTPase"/>
</dbReference>
<dbReference type="InterPro" id="IPR020568">
    <property type="entry name" value="Ribosomal_Su5_D2-typ_SF"/>
</dbReference>
<dbReference type="InterPro" id="IPR014721">
    <property type="entry name" value="Ribsml_uS5_D2-typ_fold_subgr"/>
</dbReference>
<dbReference type="NCBIfam" id="NF007365">
    <property type="entry name" value="PRK09862.1"/>
    <property type="match status" value="1"/>
</dbReference>
<dbReference type="NCBIfam" id="TIGR00368">
    <property type="entry name" value="YifB family Mg chelatase-like AAA ATPase"/>
    <property type="match status" value="1"/>
</dbReference>
<dbReference type="PANTHER" id="PTHR32039:SF7">
    <property type="entry name" value="COMPETENCE PROTEIN COMM"/>
    <property type="match status" value="1"/>
</dbReference>
<dbReference type="PANTHER" id="PTHR32039">
    <property type="entry name" value="MAGNESIUM-CHELATASE SUBUNIT CHLI"/>
    <property type="match status" value="1"/>
</dbReference>
<dbReference type="Pfam" id="PF13541">
    <property type="entry name" value="ChlI"/>
    <property type="match status" value="1"/>
</dbReference>
<dbReference type="Pfam" id="PF01078">
    <property type="entry name" value="Mg_chelatase"/>
    <property type="match status" value="1"/>
</dbReference>
<dbReference type="Pfam" id="PF13335">
    <property type="entry name" value="Mg_chelatase_C"/>
    <property type="match status" value="1"/>
</dbReference>
<dbReference type="SMART" id="SM00382">
    <property type="entry name" value="AAA"/>
    <property type="match status" value="1"/>
</dbReference>
<dbReference type="SUPFAM" id="SSF52540">
    <property type="entry name" value="P-loop containing nucleoside triphosphate hydrolases"/>
    <property type="match status" value="1"/>
</dbReference>
<dbReference type="SUPFAM" id="SSF54211">
    <property type="entry name" value="Ribosomal protein S5 domain 2-like"/>
    <property type="match status" value="1"/>
</dbReference>